<comment type="function">
    <text evidence="2">Essential for Spemann-Mangold organizer formation and subsequent anterior head development in the embryo. Inhibits canonical Wnt signaling pathway by antagonizing nuclear import of beta-catenin (ctnnb1) during embryogenesis.</text>
</comment>
<comment type="subunit">
    <text evidence="2">Interacts (via NLS1 and NLS2) with dvl2; the interaction is negatively regulated by Wnt stimulation. Interacts with csnk1a1. Interacts with ctnnb1; the interaction is positively regulated by Wnt stimulation.</text>
</comment>
<comment type="subcellular location">
    <subcellularLocation>
        <location evidence="2">Nucleus envelope</location>
    </subcellularLocation>
</comment>
<comment type="developmental stage">
    <text evidence="2">Expressed maternally and then widely throughout embryogenesis. During the neurula stage, highly expressed in the neural plate and neural fold. Strong expression also seen in brain, eyes and spinal cord at the tadpole stage.</text>
</comment>
<comment type="PTM">
    <text evidence="2">Phosphorylated by ck1/csnk1a1.</text>
</comment>
<comment type="disruption phenotype">
    <text evidence="2">Morpholino knockdown results in embryos with small eyes, head and brain structures.</text>
</comment>
<comment type="miscellaneous">
    <text evidence="5">Named Custos for the Latin term for 'guard' or 'keeper'.</text>
</comment>
<comment type="similarity">
    <text evidence="4">Belongs to the CUSTOS family.</text>
</comment>
<protein>
    <recommendedName>
        <fullName evidence="3">Protein CUSTOS</fullName>
    </recommendedName>
</protein>
<dbReference type="EMBL" id="KM235953">
    <property type="status" value="NOT_ANNOTATED_CDS"/>
    <property type="molecule type" value="mRNA"/>
</dbReference>
<dbReference type="GeneID" id="100381174"/>
<dbReference type="KEGG" id="xla:100381174"/>
<dbReference type="AGR" id="Xenbase:XB-GENE-5925308"/>
<dbReference type="CTD" id="100381174"/>
<dbReference type="Xenbase" id="XB-GENE-5925308">
    <property type="gene designation" value="c1h12orf43.L"/>
</dbReference>
<dbReference type="OrthoDB" id="10053459at2759"/>
<dbReference type="Proteomes" id="UP000186698">
    <property type="component" value="Chromosome 1L"/>
</dbReference>
<dbReference type="Bgee" id="100381174">
    <property type="expression patterns" value="Expressed in neurula embryo and 19 other cell types or tissues"/>
</dbReference>
<dbReference type="GO" id="GO:0005635">
    <property type="term" value="C:nuclear envelope"/>
    <property type="evidence" value="ECO:0000314"/>
    <property type="project" value="UniProtKB"/>
</dbReference>
<dbReference type="GO" id="GO:0030178">
    <property type="term" value="P:negative regulation of Wnt signaling pathway"/>
    <property type="evidence" value="ECO:0000315"/>
    <property type="project" value="UniProtKB"/>
</dbReference>
<dbReference type="GO" id="GO:0060061">
    <property type="term" value="P:Spemann organizer formation"/>
    <property type="evidence" value="ECO:0000315"/>
    <property type="project" value="UniProtKB"/>
</dbReference>
<dbReference type="GO" id="GO:0016055">
    <property type="term" value="P:Wnt signaling pathway"/>
    <property type="evidence" value="ECO:0007669"/>
    <property type="project" value="UniProtKB-KW"/>
</dbReference>
<dbReference type="InterPro" id="IPR026694">
    <property type="entry name" value="CUSTOS"/>
</dbReference>
<dbReference type="PANTHER" id="PTHR14482">
    <property type="entry name" value="CHROMOSOME 12 ORF 43 HOMOLOG"/>
    <property type="match status" value="1"/>
</dbReference>
<dbReference type="PANTHER" id="PTHR14482:SF0">
    <property type="entry name" value="PROTEIN CUSTOS"/>
    <property type="match status" value="1"/>
</dbReference>
<dbReference type="Pfam" id="PF23999">
    <property type="entry name" value="CUSTOS"/>
    <property type="match status" value="1"/>
</dbReference>
<name>CSTOS_XENLA</name>
<sequence length="237" mass="26515">MAAPRRGTQKSDSDSSDEDLDRFREAAWVPPGAHQKVSDEQNEKIALPSLRVRPDCHEHDGNELQTTPEFRSHVAKKLAAILDSSIREVSQNEAVHISKAGNGDSEDEGFRLFRTSLPGEAGIVTSTIPRRKLASSSSEDSEEEQQRCREAAVSACDILRHSTLQQEPQSTPSNVCDNQPPKKKRKKKKKDRGDTSQINSVEETMHIEPGKNELQAKRKKKKKQKLEMAHCDELGNE</sequence>
<keyword id="KW-0217">Developmental protein</keyword>
<keyword id="KW-0539">Nucleus</keyword>
<keyword id="KW-1185">Reference proteome</keyword>
<keyword id="KW-0879">Wnt signaling pathway</keyword>
<organism>
    <name type="scientific">Xenopus laevis</name>
    <name type="common">African clawed frog</name>
    <dbReference type="NCBI Taxonomy" id="8355"/>
    <lineage>
        <taxon>Eukaryota</taxon>
        <taxon>Metazoa</taxon>
        <taxon>Chordata</taxon>
        <taxon>Craniata</taxon>
        <taxon>Vertebrata</taxon>
        <taxon>Euteleostomi</taxon>
        <taxon>Amphibia</taxon>
        <taxon>Batrachia</taxon>
        <taxon>Anura</taxon>
        <taxon>Pipoidea</taxon>
        <taxon>Pipidae</taxon>
        <taxon>Xenopodinae</taxon>
        <taxon>Xenopus</taxon>
        <taxon>Xenopus</taxon>
    </lineage>
</organism>
<accession>P0DPK0</accession>
<feature type="chain" id="PRO_0000444887" description="Protein CUSTOS">
    <location>
        <begin position="1"/>
        <end position="237"/>
    </location>
</feature>
<feature type="region of interest" description="Disordered" evidence="1">
    <location>
        <begin position="1"/>
        <end position="23"/>
    </location>
</feature>
<feature type="region of interest" description="Disordered" evidence="1">
    <location>
        <begin position="50"/>
        <end position="69"/>
    </location>
</feature>
<feature type="region of interest" description="Disordered" evidence="1">
    <location>
        <begin position="97"/>
        <end position="237"/>
    </location>
</feature>
<feature type="short sequence motif" description="Nucleolar localization signal (NLS1)" evidence="5">
    <location>
        <begin position="182"/>
        <end position="190"/>
    </location>
</feature>
<feature type="short sequence motif" description="Nucleolar localization signal (NLS2)" evidence="5">
    <location>
        <begin position="217"/>
        <end position="225"/>
    </location>
</feature>
<feature type="compositionally biased region" description="Basic and acidic residues" evidence="1">
    <location>
        <begin position="52"/>
        <end position="62"/>
    </location>
</feature>
<feature type="compositionally biased region" description="Polar residues" evidence="1">
    <location>
        <begin position="162"/>
        <end position="177"/>
    </location>
</feature>
<feature type="compositionally biased region" description="Basic residues" evidence="1">
    <location>
        <begin position="181"/>
        <end position="190"/>
    </location>
</feature>
<feature type="compositionally biased region" description="Basic and acidic residues" evidence="1">
    <location>
        <begin position="203"/>
        <end position="216"/>
    </location>
</feature>
<feature type="compositionally biased region" description="Basic and acidic residues" evidence="1">
    <location>
        <begin position="225"/>
        <end position="237"/>
    </location>
</feature>
<reference key="1">
    <citation type="journal article" date="2014" name="Proc. Natl. Acad. Sci. U.S.A.">
        <title>Custos controls beta-catenin to regulate head development during vertebrate embryogenesis.</title>
        <authorList>
            <person name="Komiya Y."/>
            <person name="Mandrekar N."/>
            <person name="Sato A."/>
            <person name="Dawid I.B."/>
            <person name="Habas R."/>
        </authorList>
    </citation>
    <scope>NUCLEOTIDE SEQUENCE [MRNA]</scope>
    <scope>FUNCTION</scope>
    <scope>INTERACTION WITH DVL2; CSNK1A1 AND CTNNB1</scope>
    <scope>PHOSPHORYLATION</scope>
    <scope>SUBCELLULAR LOCATION</scope>
    <scope>DISRUPTION PHENOTYPE</scope>
</reference>
<evidence type="ECO:0000256" key="1">
    <source>
        <dbReference type="SAM" id="MobiDB-lite"/>
    </source>
</evidence>
<evidence type="ECO:0000269" key="2">
    <source>
    </source>
</evidence>
<evidence type="ECO:0000303" key="3">
    <source>
    </source>
</evidence>
<evidence type="ECO:0000305" key="4"/>
<evidence type="ECO:0000305" key="5">
    <source>
    </source>
</evidence>
<gene>
    <name evidence="3" type="primary">custos</name>
</gene>
<proteinExistence type="evidence at protein level"/>